<feature type="chain" id="PRO_0000205195" description="Beta-arrestin-1">
    <location>
        <begin position="1"/>
        <end position="418"/>
    </location>
</feature>
<feature type="region of interest" description="Interaction with SRC" evidence="1">
    <location>
        <begin position="1"/>
        <end position="163"/>
    </location>
</feature>
<feature type="region of interest" description="Interaction with CHRM2" evidence="1">
    <location>
        <begin position="45"/>
        <end position="86"/>
    </location>
</feature>
<feature type="region of interest" description="Interaction with TRAF6" evidence="1">
    <location>
        <begin position="318"/>
        <end position="418"/>
    </location>
</feature>
<feature type="region of interest" description="Disordered" evidence="3">
    <location>
        <begin position="353"/>
        <end position="375"/>
    </location>
</feature>
<feature type="region of interest" description="Disordered" evidence="3">
    <location>
        <begin position="397"/>
        <end position="418"/>
    </location>
</feature>
<feature type="compositionally biased region" description="Basic and acidic residues" evidence="3">
    <location>
        <begin position="355"/>
        <end position="366"/>
    </location>
</feature>
<feature type="binding site" evidence="1">
    <location>
        <position position="250"/>
    </location>
    <ligand>
        <name>1D-myo-inositol hexakisphosphate</name>
        <dbReference type="ChEBI" id="CHEBI:58130"/>
    </ligand>
</feature>
<feature type="binding site" evidence="1">
    <location>
        <position position="255"/>
    </location>
    <ligand>
        <name>1D-myo-inositol hexakisphosphate</name>
        <dbReference type="ChEBI" id="CHEBI:58130"/>
    </ligand>
</feature>
<feature type="binding site" evidence="1">
    <location>
        <position position="324"/>
    </location>
    <ligand>
        <name>1D-myo-inositol hexakisphosphate</name>
        <dbReference type="ChEBI" id="CHEBI:58130"/>
    </ligand>
</feature>
<feature type="binding site" evidence="1">
    <location>
        <position position="326"/>
    </location>
    <ligand>
        <name>1D-myo-inositol hexakisphosphate</name>
        <dbReference type="ChEBI" id="CHEBI:58130"/>
    </ligand>
</feature>
<feature type="modified residue" description="Phosphotyrosine" evidence="10">
    <location>
        <position position="47"/>
    </location>
</feature>
<feature type="modified residue" description="Phosphoserine" evidence="11">
    <location>
        <position position="412"/>
    </location>
</feature>
<feature type="splice variant" id="VSP_019545" description="In isoform 1B." evidence="7 8">
    <location>
        <begin position="334"/>
        <end position="341"/>
    </location>
</feature>
<comment type="function">
    <text evidence="1 4 5 6">Functions in regulating agonist-mediated G-protein coupled receptor (GPCR) signaling by mediating both receptor desensitization and resensitization processes. During homologous desensitization, beta-arrestins bind to the GPRK-phosphorylated receptor and sterically preclude its coupling to the cognate G-protein; the binding appears to require additional receptor determinants exposed only in the active receptor conformation. The beta-arrestins target many receptors for internalization by acting as endocytic adapters (CLASPs, clathrin-associated sorting proteins) and recruiting the GPRCs to the adapter protein 2 complex 2 (AP-2) in clathrin-coated pits (CCPs). However, the extent of beta-arrestin involvement appears to vary significantly depending on the receptor, agonist and cell type. Internalized arrestin-receptor complexes traffic to intracellular endosomes, where they remain uncoupled from G-proteins. Two different modes of arrestin-mediated internalization occur. Class A receptors, like ADRB2, OPRM1, ENDRA, D1AR and ADRA1B dissociate from beta-arrestin at or near the plasma membrane and undergo rapid recycling. Class B receptors, like AVPR2, AGTR1, NTSR1, TRHR and TACR1 internalize as a complex with arrestin and traffic with it to endosomal vesicles, presumably as desensitized receptors, for extended periods of time. Receptor resensitization then requires that receptor-bound arrestin is removed so that the receptor can be dephosphorylated and returned to the plasma membrane. Involved in internalization of P2RY4 and UTP-stimulated internalization of P2RY2. Involved in phosphorylation-dependent internalization of OPRD1 ands subsequent recycling. Involved in the degradation of cAMP by recruiting cAMP phosphodiesterases to ligand-activated receptors. Beta-arrestins function as multivalent adapter proteins that can switch the GPCR from a G-protein signaling mode that transmits short-lived signals from the plasma membrane via small molecule second messengers and ion channels to a beta-arrestin signaling mode that transmits a distinct set of signals that are initiated as the receptor internalizes and transits the intracellular compartment. Acts as a signaling scaffold for MAPK pathways such as MAPK1/3 (ERK1/2). ERK1/2 activated by the beta-arrestin scaffold is largely excluded from the nucleus and confined to cytoplasmic locations such as endocytic vesicles, also called beta-arrestin signalosomes. Recruits c-Src/SRC to ADRB2 resulting in ERK activation. GPCRs for which the beta-arrestin-mediated signaling relies on both ARRB1 and ARRB2 (codependent regulation) include ADRB2, F2RL1 and PTH1R. For some GPCRs the beta-arrestin-mediated signaling relies on either ARRB1 or ARRB2 and is inhibited by the other respective beta-arrestin form (reciprocal regulation). Inhibits ERK1/2 signaling in AGTR1- and AVPR2-mediated activation (reciprocal regulation). Is required for SP-stimulated endocytosis of NK1R and recruits c-Src/SRC to internalized NK1R resulting in ERK1/2 activation, which is required for the antiapoptotic effects of SP. Is involved in proteinase-activated F2RL1-mediated ERK activity. Acts as a signaling scaffold for the AKT1 pathway. Is involved in alpha-thrombin-stimulated AKT1 signaling. Is involved in IGF1-stimulated AKT1 signaling leading to increased protection from apoptosis. Involved in activation of the p38 MAPK signaling pathway and in actin bundle formation. Involved in F2RL1-mediated cytoskeletal rearrangement and chemotaxis. Involved in AGTR1-mediated stress fiber formation by acting together with GNAQ to activate RHOA. Appears to function as signaling scaffold involved in regulation of MIP-1-beta-stimulated CCR5-dependent chemotaxis. Involved in attenuation of NF-kappa-B-dependent transcription in response to GPCR or cytokine stimulation by interacting with and stabilizing CHUK. May serve as nuclear messenger for GPCRs. Involved in OPRD1-stimulated transcriptional regulation by translocating to CDKN1B and FOS promoter regions and recruiting EP300 resulting in acetylation of histone H4. Involved in regulation of LEF1 transcriptional activity via interaction with DVL1 and/or DVL2 Also involved in regulation of receptors other than GPCRs. Involved in Toll-like receptor and IL-1 receptor signaling through the interaction with TRAF6 which prevents TRAF6 autoubiquitination and oligomerization required for activation of NF-kappa-B and JUN. Involved in IL8-mediated granule release in neutrophils. Binds phosphoinositides. Binds inositolhexakisphosphate (InsP6) (By similarity). Required for atypical chemokine receptor ACKR2-induced RAC1-LIMK1-PAK1-dependent phosphorylation of cofilin (CFL1) and for the up-regulation of ACKR2 from endosomal compartment to cell membrane, increasing its efficiency in chemokine uptake and degradation. Involved in the internalization of the atypical chemokine receptor ACKR3 (By similarity). Negatively regulates the NOTCH signaling pathway by mediating the ubiquitination and degradation of NOTCH1 by ITCH. Participates in the recruitment of the ubiquitin-protein ligase to the receptor (PubMed:23886940).</text>
</comment>
<comment type="subunit">
    <text evidence="2 6">Monomer. Homodimer. Homooligomer; the self-association is mediated by InsP6-binding. Heterooligomer with ARRB2; the association is mediated by InsP6-binding. Interacts with ADRB2 (phosphorylated). Interacts with CHRM2 (phosphorylated). Interacts with LHCGR. Interacts with CYTH2 and CASR. Interacts with AP2B1 (dephosphorylated); phosphorylation of AP2B1 disrupts the interaction. Interacts (dephosphorylated at Ser-412) with CLTC. Interacts with CCR2 and GRK2. Interacts with CRR5. Interacts with PTAFR (phosphorylated on serine residues). Interacts with CLTC and MAP2K3. Interacts with CREB1. Interacts with TRAF6. Interacts with IGF1R and MDM2. Interacts with C5AR1. Interacts with PDE4D. Interacts with SRC (via the SH3 domain and the protein kinase domain); the interaction is independent of the phosphorylation state of SRC C-terminus. Interacts with TACR1. Interacts with RAF1. Interacts with DVL1; the interaction is enhanced by phosphorylation of DVL1. Interacts with DVL2; the interaction is enhanced by phosphorylation of DVL2. Interacts with IGF1R. Interacts with CHUK, IKBKB and MAP3K14. Associates with MAP kinase p38. Part of a MAPK signaling complex consisting of TACR1, ARRB1, SRC, MAPK1 (activated) and MAPK3 (activated). Part of a MAPK signaling complex consisting of F2RL1, ARRB1, RAF1, MAPK1 (activated) and MAPK3 (activated). Interacts with GPR143 (By similarity). Interacts with MAP2K4/MKK4. Interacts with HCK and CXCR1 (phosphorylated) (By similarity). Interacts with ACKR3 and ACKR4 (By similarity). Interacts with ARRDC1; the interaction is direct (PubMed:23886940). Interacts with GPR61, GPR62 and GPR135 (By similarity).</text>
</comment>
<comment type="interaction">
    <interactant intactId="EBI-641778">
        <id>Q8BWG8</id>
    </interactant>
    <interactant intactId="EBI-8344379">
        <id>P58660</id>
        <label>Card10</label>
    </interactant>
    <organismsDiffer>false</organismsDiffer>
    <experiments>4</experiments>
</comment>
<comment type="interaction">
    <interactant intactId="EBI-641778">
        <id>Q8BWG8</id>
    </interactant>
    <interactant intactId="EBI-642500">
        <id>O54946</id>
        <label>Dnajb6</label>
    </interactant>
    <organismsDiffer>false</organismsDiffer>
    <experiments>6</experiments>
</comment>
<comment type="interaction">
    <interactant intactId="EBI-641778">
        <id>Q8BWG8</id>
    </interactant>
    <interactant intactId="EBI-642449">
        <id>O35387</id>
        <label>Hax1</label>
    </interactant>
    <organismsDiffer>false</organismsDiffer>
    <experiments>6</experiments>
</comment>
<comment type="interaction">
    <interactant intactId="EBI-641778">
        <id>Q8BWG8</id>
    </interactant>
    <interactant intactId="EBI-641788">
        <id>P23804</id>
        <label>Mdm2</label>
    </interactant>
    <organismsDiffer>false</organismsDiffer>
    <experiments>4</experiments>
</comment>
<comment type="interaction">
    <interactant intactId="EBI-641778">
        <id>Q8BWG8</id>
    </interactant>
    <interactant intactId="EBI-642563">
        <id>Q60795</id>
        <label>Nfe2l2</label>
    </interactant>
    <organismsDiffer>false</organismsDiffer>
    <experiments>4</experiments>
</comment>
<comment type="subcellular location">
    <subcellularLocation>
        <location evidence="1">Cytoplasm</location>
    </subcellularLocation>
    <subcellularLocation>
        <location evidence="1">Nucleus</location>
    </subcellularLocation>
    <subcellularLocation>
        <location evidence="1">Cell membrane</location>
    </subcellularLocation>
    <subcellularLocation>
        <location evidence="9">Membrane</location>
        <location evidence="9">Clathrin-coated pit</location>
    </subcellularLocation>
    <subcellularLocation>
        <location evidence="1">Cell projection</location>
        <location evidence="1">Pseudopodium</location>
    </subcellularLocation>
    <subcellularLocation>
        <location evidence="1">Cytoplasmic vesicle</location>
    </subcellularLocation>
    <text evidence="1">Translocates to the plasma membrane and colocalizes with antagonist-stimulated GPCRs. The monomeric form is predominantly located in the nucleus. The oligomeric form is located in the cytoplasm. Translocates to the nucleus upon stimulation of OPRD1 (By similarity).</text>
</comment>
<comment type="alternative products">
    <event type="alternative splicing"/>
    <isoform>
        <id>Q8BWG8-1</id>
        <name>1A</name>
        <sequence type="displayed"/>
    </isoform>
    <isoform>
        <id>Q8BWG8-2</id>
        <name>1B</name>
        <sequence type="described" ref="VSP_019545"/>
    </isoform>
</comment>
<comment type="domain">
    <text evidence="1">The [DE]-X(1,2)-F-X-X-[FL]-X-X-X-R motif mediates interaction the AP-2 complex subunit AP2B1. Binding to phosphorylated GPCRs induces a conformationanl change that exposes the motif to the surface (By similarity).</text>
</comment>
<comment type="domain">
    <text evidence="1">The N-terminus binds InsP6 with low affinity.</text>
</comment>
<comment type="domain">
    <text evidence="1">The C-terminus binds InsP6 with high affinity.</text>
</comment>
<comment type="PTM">
    <text evidence="1">Constitutively phosphorylated at in the cytoplasm. At the plasma membrane, is rapidly dephosphorylated, a process that is required for clathrin binding and ADRB2 endocytosis but not for ADRB2 binding and desensitization. Once internalized, is rephosphorylated (By similarity).</text>
</comment>
<comment type="PTM">
    <text evidence="1">The ubiquitination status appears to regulate the formation and trafficking of beta-arrestin-GPCR complexes and signaling. Ubiquitination appears to occur GPCR-specific. Ubiquitinated by MDM2; the ubiquitination is required for rapid internalization of ADRB2. Deubiquitinated by USP33; the deubiquitination leads to a dissociation of the beta-arrestin-GPCR complex. Stimulation of a class A GPCR, such as ADRB2, induces transient ubiquitination and subsequently promotes association with USP33 (By similarity).</text>
</comment>
<comment type="similarity">
    <text evidence="9">Belongs to the arrestin family.</text>
</comment>
<evidence type="ECO:0000250" key="1"/>
<evidence type="ECO:0000250" key="2">
    <source>
        <dbReference type="UniProtKB" id="P49407"/>
    </source>
</evidence>
<evidence type="ECO:0000256" key="3">
    <source>
        <dbReference type="SAM" id="MobiDB-lite"/>
    </source>
</evidence>
<evidence type="ECO:0000269" key="4">
    <source>
    </source>
</evidence>
<evidence type="ECO:0000269" key="5">
    <source>
    </source>
</evidence>
<evidence type="ECO:0000269" key="6">
    <source>
    </source>
</evidence>
<evidence type="ECO:0000303" key="7">
    <source>
    </source>
</evidence>
<evidence type="ECO:0000303" key="8">
    <source>
    </source>
</evidence>
<evidence type="ECO:0000305" key="9"/>
<evidence type="ECO:0007744" key="10">
    <source>
    </source>
</evidence>
<evidence type="ECO:0007744" key="11">
    <source>
    </source>
</evidence>
<organism>
    <name type="scientific">Mus musculus</name>
    <name type="common">Mouse</name>
    <dbReference type="NCBI Taxonomy" id="10090"/>
    <lineage>
        <taxon>Eukaryota</taxon>
        <taxon>Metazoa</taxon>
        <taxon>Chordata</taxon>
        <taxon>Craniata</taxon>
        <taxon>Vertebrata</taxon>
        <taxon>Euteleostomi</taxon>
        <taxon>Mammalia</taxon>
        <taxon>Eutheria</taxon>
        <taxon>Euarchontoglires</taxon>
        <taxon>Glires</taxon>
        <taxon>Rodentia</taxon>
        <taxon>Myomorpha</taxon>
        <taxon>Muroidea</taxon>
        <taxon>Muridae</taxon>
        <taxon>Murinae</taxon>
        <taxon>Mus</taxon>
        <taxon>Mus</taxon>
    </lineage>
</organism>
<accession>Q8BWG8</accession>
<accession>Q3UH95</accession>
<accession>Q8BTJ5</accession>
<proteinExistence type="evidence at protein level"/>
<protein>
    <recommendedName>
        <fullName>Beta-arrestin-1</fullName>
    </recommendedName>
    <alternativeName>
        <fullName>Arrestin beta-1</fullName>
    </alternativeName>
</protein>
<gene>
    <name type="primary">Arrb1</name>
</gene>
<reference key="1">
    <citation type="journal article" date="2005" name="Science">
        <title>The transcriptional landscape of the mammalian genome.</title>
        <authorList>
            <person name="Carninci P."/>
            <person name="Kasukawa T."/>
            <person name="Katayama S."/>
            <person name="Gough J."/>
            <person name="Frith M.C."/>
            <person name="Maeda N."/>
            <person name="Oyama R."/>
            <person name="Ravasi T."/>
            <person name="Lenhard B."/>
            <person name="Wells C."/>
            <person name="Kodzius R."/>
            <person name="Shimokawa K."/>
            <person name="Bajic V.B."/>
            <person name="Brenner S.E."/>
            <person name="Batalov S."/>
            <person name="Forrest A.R."/>
            <person name="Zavolan M."/>
            <person name="Davis M.J."/>
            <person name="Wilming L.G."/>
            <person name="Aidinis V."/>
            <person name="Allen J.E."/>
            <person name="Ambesi-Impiombato A."/>
            <person name="Apweiler R."/>
            <person name="Aturaliya R.N."/>
            <person name="Bailey T.L."/>
            <person name="Bansal M."/>
            <person name="Baxter L."/>
            <person name="Beisel K.W."/>
            <person name="Bersano T."/>
            <person name="Bono H."/>
            <person name="Chalk A.M."/>
            <person name="Chiu K.P."/>
            <person name="Choudhary V."/>
            <person name="Christoffels A."/>
            <person name="Clutterbuck D.R."/>
            <person name="Crowe M.L."/>
            <person name="Dalla E."/>
            <person name="Dalrymple B.P."/>
            <person name="de Bono B."/>
            <person name="Della Gatta G."/>
            <person name="di Bernardo D."/>
            <person name="Down T."/>
            <person name="Engstrom P."/>
            <person name="Fagiolini M."/>
            <person name="Faulkner G."/>
            <person name="Fletcher C.F."/>
            <person name="Fukushima T."/>
            <person name="Furuno M."/>
            <person name="Futaki S."/>
            <person name="Gariboldi M."/>
            <person name="Georgii-Hemming P."/>
            <person name="Gingeras T.R."/>
            <person name="Gojobori T."/>
            <person name="Green R.E."/>
            <person name="Gustincich S."/>
            <person name="Harbers M."/>
            <person name="Hayashi Y."/>
            <person name="Hensch T.K."/>
            <person name="Hirokawa N."/>
            <person name="Hill D."/>
            <person name="Huminiecki L."/>
            <person name="Iacono M."/>
            <person name="Ikeo K."/>
            <person name="Iwama A."/>
            <person name="Ishikawa T."/>
            <person name="Jakt M."/>
            <person name="Kanapin A."/>
            <person name="Katoh M."/>
            <person name="Kawasawa Y."/>
            <person name="Kelso J."/>
            <person name="Kitamura H."/>
            <person name="Kitano H."/>
            <person name="Kollias G."/>
            <person name="Krishnan S.P."/>
            <person name="Kruger A."/>
            <person name="Kummerfeld S.K."/>
            <person name="Kurochkin I.V."/>
            <person name="Lareau L.F."/>
            <person name="Lazarevic D."/>
            <person name="Lipovich L."/>
            <person name="Liu J."/>
            <person name="Liuni S."/>
            <person name="McWilliam S."/>
            <person name="Madan Babu M."/>
            <person name="Madera M."/>
            <person name="Marchionni L."/>
            <person name="Matsuda H."/>
            <person name="Matsuzawa S."/>
            <person name="Miki H."/>
            <person name="Mignone F."/>
            <person name="Miyake S."/>
            <person name="Morris K."/>
            <person name="Mottagui-Tabar S."/>
            <person name="Mulder N."/>
            <person name="Nakano N."/>
            <person name="Nakauchi H."/>
            <person name="Ng P."/>
            <person name="Nilsson R."/>
            <person name="Nishiguchi S."/>
            <person name="Nishikawa S."/>
            <person name="Nori F."/>
            <person name="Ohara O."/>
            <person name="Okazaki Y."/>
            <person name="Orlando V."/>
            <person name="Pang K.C."/>
            <person name="Pavan W.J."/>
            <person name="Pavesi G."/>
            <person name="Pesole G."/>
            <person name="Petrovsky N."/>
            <person name="Piazza S."/>
            <person name="Reed J."/>
            <person name="Reid J.F."/>
            <person name="Ring B.Z."/>
            <person name="Ringwald M."/>
            <person name="Rost B."/>
            <person name="Ruan Y."/>
            <person name="Salzberg S.L."/>
            <person name="Sandelin A."/>
            <person name="Schneider C."/>
            <person name="Schoenbach C."/>
            <person name="Sekiguchi K."/>
            <person name="Semple C.A."/>
            <person name="Seno S."/>
            <person name="Sessa L."/>
            <person name="Sheng Y."/>
            <person name="Shibata Y."/>
            <person name="Shimada H."/>
            <person name="Shimada K."/>
            <person name="Silva D."/>
            <person name="Sinclair B."/>
            <person name="Sperling S."/>
            <person name="Stupka E."/>
            <person name="Sugiura K."/>
            <person name="Sultana R."/>
            <person name="Takenaka Y."/>
            <person name="Taki K."/>
            <person name="Tammoja K."/>
            <person name="Tan S.L."/>
            <person name="Tang S."/>
            <person name="Taylor M.S."/>
            <person name="Tegner J."/>
            <person name="Teichmann S.A."/>
            <person name="Ueda H.R."/>
            <person name="van Nimwegen E."/>
            <person name="Verardo R."/>
            <person name="Wei C.L."/>
            <person name="Yagi K."/>
            <person name="Yamanishi H."/>
            <person name="Zabarovsky E."/>
            <person name="Zhu S."/>
            <person name="Zimmer A."/>
            <person name="Hide W."/>
            <person name="Bult C."/>
            <person name="Grimmond S.M."/>
            <person name="Teasdale R.D."/>
            <person name="Liu E.T."/>
            <person name="Brusic V."/>
            <person name="Quackenbush J."/>
            <person name="Wahlestedt C."/>
            <person name="Mattick J.S."/>
            <person name="Hume D.A."/>
            <person name="Kai C."/>
            <person name="Sasaki D."/>
            <person name="Tomaru Y."/>
            <person name="Fukuda S."/>
            <person name="Kanamori-Katayama M."/>
            <person name="Suzuki M."/>
            <person name="Aoki J."/>
            <person name="Arakawa T."/>
            <person name="Iida J."/>
            <person name="Imamura K."/>
            <person name="Itoh M."/>
            <person name="Kato T."/>
            <person name="Kawaji H."/>
            <person name="Kawagashira N."/>
            <person name="Kawashima T."/>
            <person name="Kojima M."/>
            <person name="Kondo S."/>
            <person name="Konno H."/>
            <person name="Nakano K."/>
            <person name="Ninomiya N."/>
            <person name="Nishio T."/>
            <person name="Okada M."/>
            <person name="Plessy C."/>
            <person name="Shibata K."/>
            <person name="Shiraki T."/>
            <person name="Suzuki S."/>
            <person name="Tagami M."/>
            <person name="Waki K."/>
            <person name="Watahiki A."/>
            <person name="Okamura-Oho Y."/>
            <person name="Suzuki H."/>
            <person name="Kawai J."/>
            <person name="Hayashizaki Y."/>
        </authorList>
    </citation>
    <scope>NUCLEOTIDE SEQUENCE [LARGE SCALE MRNA] (ISOFORMS 1A AND 1B)</scope>
    <source>
        <strain>C57BL/6J</strain>
        <tissue>Colon</tissue>
        <tissue>Kidney</tissue>
    </source>
</reference>
<reference key="2">
    <citation type="journal article" date="2004" name="Genome Res.">
        <title>The status, quality, and expansion of the NIH full-length cDNA project: the Mammalian Gene Collection (MGC).</title>
        <authorList>
            <consortium name="The MGC Project Team"/>
        </authorList>
    </citation>
    <scope>NUCLEOTIDE SEQUENCE [LARGE SCALE MRNA] (ISOFORM 1B)</scope>
</reference>
<reference key="3">
    <citation type="journal article" date="2003" name="J. Biol. Chem.">
        <title>Beta-arrestin1 mediates insulin-like growth factor 1 (IGF-1) activation of phosphatidylinositol 3-kinase (PI3K) and anti-apoptosis.</title>
        <authorList>
            <person name="Povsic T.J."/>
            <person name="Kohout T.A."/>
            <person name="Lefkowitz R.J."/>
        </authorList>
    </citation>
    <scope>FUNCTION IN AKT1 SIGNALING</scope>
</reference>
<reference key="4">
    <citation type="journal article" date="2007" name="J. Immunol.">
        <title>Quantitative time-resolved phosphoproteomic analysis of mast cell signaling.</title>
        <authorList>
            <person name="Cao L."/>
            <person name="Yu K."/>
            <person name="Banh C."/>
            <person name="Nguyen V."/>
            <person name="Ritz A."/>
            <person name="Raphael B.J."/>
            <person name="Kawakami Y."/>
            <person name="Kawakami T."/>
            <person name="Salomon A.R."/>
        </authorList>
    </citation>
    <scope>PHOSPHORYLATION [LARGE SCALE ANALYSIS] AT TYR-47</scope>
    <scope>IDENTIFICATION BY MASS SPECTROMETRY [LARGE SCALE ANALYSIS]</scope>
    <source>
        <tissue>Mast cell</tissue>
    </source>
</reference>
<reference key="5">
    <citation type="journal article" date="2008" name="FASEB J.">
        <title>Beta-arrestins specifically constrain beta2-adrenergic receptor signaling and function in airway smooth muscle.</title>
        <authorList>
            <person name="Deshpande D.A."/>
            <person name="Theriot B.S."/>
            <person name="Penn R.B."/>
            <person name="Walker J.K."/>
        </authorList>
    </citation>
    <scope>FUNCTION IN BETA-ADRENERGIC RECEPTOR REGULATION</scope>
</reference>
<reference key="6">
    <citation type="journal article" date="2010" name="Cell">
        <title>A tissue-specific atlas of mouse protein phosphorylation and expression.</title>
        <authorList>
            <person name="Huttlin E.L."/>
            <person name="Jedrychowski M.P."/>
            <person name="Elias J.E."/>
            <person name="Goswami T."/>
            <person name="Rad R."/>
            <person name="Beausoleil S.A."/>
            <person name="Villen J."/>
            <person name="Haas W."/>
            <person name="Sowa M.E."/>
            <person name="Gygi S.P."/>
        </authorList>
    </citation>
    <scope>PHOSPHORYLATION [LARGE SCALE ANALYSIS] AT SER-412</scope>
    <scope>IDENTIFICATION BY MASS SPECTROMETRY [LARGE SCALE ANALYSIS]</scope>
    <source>
        <tissue>Brain</tissue>
        <tissue>Brown adipose tissue</tissue>
        <tissue>Kidney</tissue>
        <tissue>Lung</tissue>
        <tissue>Spleen</tissue>
        <tissue>Testis</tissue>
    </source>
</reference>
<reference key="7">
    <citation type="journal article" date="2013" name="J. Cell Sci.">
        <title>Alpha-arrestin 1 (ARRDC1) and beta-arrestins cooperate to mediate Notch degradation in mammals.</title>
        <authorList>
            <person name="Puca L."/>
            <person name="Chastagner P."/>
            <person name="Meas-Yedid V."/>
            <person name="Israel A."/>
            <person name="Brou C."/>
        </authorList>
    </citation>
    <scope>FUNCTION</scope>
    <scope>INTERACTION WITH ARRDC1</scope>
</reference>
<dbReference type="EMBL" id="AK052588">
    <property type="protein sequence ID" value="BAC35050.1"/>
    <property type="molecule type" value="mRNA"/>
</dbReference>
<dbReference type="EMBL" id="AK090090">
    <property type="protein sequence ID" value="BAC41087.1"/>
    <property type="molecule type" value="mRNA"/>
</dbReference>
<dbReference type="EMBL" id="AK144054">
    <property type="protein sequence ID" value="BAE25673.1"/>
    <property type="molecule type" value="mRNA"/>
</dbReference>
<dbReference type="EMBL" id="AK147508">
    <property type="protein sequence ID" value="BAE27962.1"/>
    <property type="molecule type" value="mRNA"/>
</dbReference>
<dbReference type="EMBL" id="AK165514">
    <property type="protein sequence ID" value="BAE38230.1"/>
    <property type="molecule type" value="mRNA"/>
</dbReference>
<dbReference type="EMBL" id="BC108969">
    <property type="protein sequence ID" value="AAI08970.1"/>
    <property type="molecule type" value="mRNA"/>
</dbReference>
<dbReference type="EMBL" id="BC108970">
    <property type="protein sequence ID" value="AAI08971.1"/>
    <property type="molecule type" value="mRNA"/>
</dbReference>
<dbReference type="CCDS" id="CCDS21484.1">
    <molecule id="Q8BWG8-2"/>
</dbReference>
<dbReference type="CCDS" id="CCDS40032.1">
    <molecule id="Q8BWG8-1"/>
</dbReference>
<dbReference type="RefSeq" id="NP_796205.1">
    <molecule id="Q8BWG8-1"/>
    <property type="nucleotide sequence ID" value="NM_177231.2"/>
</dbReference>
<dbReference type="RefSeq" id="NP_835738.1">
    <molecule id="Q8BWG8-2"/>
    <property type="nucleotide sequence ID" value="NM_178220.3"/>
</dbReference>
<dbReference type="SMR" id="Q8BWG8"/>
<dbReference type="BioGRID" id="224960">
    <property type="interactions" value="20"/>
</dbReference>
<dbReference type="CORUM" id="Q8BWG8"/>
<dbReference type="DIP" id="DIP-49444N"/>
<dbReference type="FunCoup" id="Q8BWG8">
    <property type="interactions" value="3255"/>
</dbReference>
<dbReference type="IntAct" id="Q8BWG8">
    <property type="interactions" value="16"/>
</dbReference>
<dbReference type="MINT" id="Q8BWG8"/>
<dbReference type="STRING" id="10090.ENSMUSP00000095866"/>
<dbReference type="GlyGen" id="Q8BWG8">
    <property type="glycosylation" value="2 sites, 1 O-linked glycan (1 site)"/>
</dbReference>
<dbReference type="iPTMnet" id="Q8BWG8"/>
<dbReference type="PhosphoSitePlus" id="Q8BWG8"/>
<dbReference type="CPTAC" id="non-CPTAC-3767"/>
<dbReference type="jPOST" id="Q8BWG8"/>
<dbReference type="PaxDb" id="10090-ENSMUSP00000095866"/>
<dbReference type="ProteomicsDB" id="281903">
    <molecule id="Q8BWG8-1"/>
</dbReference>
<dbReference type="ProteomicsDB" id="281904">
    <molecule id="Q8BWG8-2"/>
</dbReference>
<dbReference type="Pumba" id="Q8BWG8"/>
<dbReference type="Antibodypedia" id="3527">
    <property type="antibodies" value="731 antibodies from 45 providers"/>
</dbReference>
<dbReference type="DNASU" id="109689"/>
<dbReference type="Ensembl" id="ENSMUST00000032995.15">
    <molecule id="Q8BWG8-2"/>
    <property type="protein sequence ID" value="ENSMUSP00000032995.9"/>
    <property type="gene ID" value="ENSMUSG00000018909.16"/>
</dbReference>
<dbReference type="Ensembl" id="ENSMUST00000098266.9">
    <molecule id="Q8BWG8-1"/>
    <property type="protein sequence ID" value="ENSMUSP00000095866.3"/>
    <property type="gene ID" value="ENSMUSG00000018909.16"/>
</dbReference>
<dbReference type="GeneID" id="109689"/>
<dbReference type="KEGG" id="mmu:109689"/>
<dbReference type="UCSC" id="uc009ilu.1">
    <molecule id="Q8BWG8-1"/>
    <property type="organism name" value="mouse"/>
</dbReference>
<dbReference type="UCSC" id="uc009ilv.1">
    <molecule id="Q8BWG8-2"/>
    <property type="organism name" value="mouse"/>
</dbReference>
<dbReference type="AGR" id="MGI:99473"/>
<dbReference type="CTD" id="408"/>
<dbReference type="MGI" id="MGI:99473">
    <property type="gene designation" value="Arrb1"/>
</dbReference>
<dbReference type="VEuPathDB" id="HostDB:ENSMUSG00000018909"/>
<dbReference type="eggNOG" id="KOG3865">
    <property type="taxonomic scope" value="Eukaryota"/>
</dbReference>
<dbReference type="GeneTree" id="ENSGT00950000182887"/>
<dbReference type="HOGENOM" id="CLU_033484_1_1_1"/>
<dbReference type="InParanoid" id="Q8BWG8"/>
<dbReference type="PhylomeDB" id="Q8BWG8"/>
<dbReference type="TreeFam" id="TF314260"/>
<dbReference type="Reactome" id="R-MMU-418555">
    <property type="pathway name" value="G alpha (s) signalling events"/>
</dbReference>
<dbReference type="Reactome" id="R-MMU-432720">
    <property type="pathway name" value="Lysosome Vesicle Biogenesis"/>
</dbReference>
<dbReference type="Reactome" id="R-MMU-432722">
    <property type="pathway name" value="Golgi Associated Vesicle Biogenesis"/>
</dbReference>
<dbReference type="Reactome" id="R-MMU-456926">
    <property type="pathway name" value="Thrombin signalling through proteinase activated receptors (PARs)"/>
</dbReference>
<dbReference type="Reactome" id="R-MMU-5635838">
    <property type="pathway name" value="Activation of SMO"/>
</dbReference>
<dbReference type="Reactome" id="R-MMU-5674135">
    <property type="pathway name" value="MAP2K and MAPK activation"/>
</dbReference>
<dbReference type="Reactome" id="R-MMU-5689880">
    <property type="pathway name" value="Ub-specific processing proteases"/>
</dbReference>
<dbReference type="Reactome" id="R-MMU-8856825">
    <property type="pathway name" value="Cargo recognition for clathrin-mediated endocytosis"/>
</dbReference>
<dbReference type="Reactome" id="R-MMU-8856828">
    <property type="pathway name" value="Clathrin-mediated endocytosis"/>
</dbReference>
<dbReference type="Reactome" id="R-MMU-9839389">
    <property type="pathway name" value="TGFBR3 regulates TGF-beta signaling"/>
</dbReference>
<dbReference type="BioGRID-ORCS" id="109689">
    <property type="hits" value="3 hits in 80 CRISPR screens"/>
</dbReference>
<dbReference type="ChiTaRS" id="Arrb1">
    <property type="organism name" value="mouse"/>
</dbReference>
<dbReference type="PRO" id="PR:Q8BWG8"/>
<dbReference type="Proteomes" id="UP000000589">
    <property type="component" value="Chromosome 7"/>
</dbReference>
<dbReference type="RNAct" id="Q8BWG8">
    <property type="molecule type" value="protein"/>
</dbReference>
<dbReference type="Bgee" id="ENSMUSG00000018909">
    <property type="expression patterns" value="Expressed in fetal liver hematopoietic progenitor cell and 267 other cell types or tissues"/>
</dbReference>
<dbReference type="ExpressionAtlas" id="Q8BWG8">
    <property type="expression patterns" value="baseline and differential"/>
</dbReference>
<dbReference type="GO" id="GO:0005905">
    <property type="term" value="C:clathrin-coated pit"/>
    <property type="evidence" value="ECO:0007669"/>
    <property type="project" value="UniProtKB-SubCell"/>
</dbReference>
<dbReference type="GO" id="GO:0031410">
    <property type="term" value="C:cytoplasmic vesicle"/>
    <property type="evidence" value="ECO:0007669"/>
    <property type="project" value="UniProtKB-KW"/>
</dbReference>
<dbReference type="GO" id="GO:0005829">
    <property type="term" value="C:cytosol"/>
    <property type="evidence" value="ECO:0000314"/>
    <property type="project" value="UniProtKB"/>
</dbReference>
<dbReference type="GO" id="GO:0005634">
    <property type="term" value="C:nucleus"/>
    <property type="evidence" value="ECO:0007669"/>
    <property type="project" value="UniProtKB-SubCell"/>
</dbReference>
<dbReference type="GO" id="GO:0005886">
    <property type="term" value="C:plasma membrane"/>
    <property type="evidence" value="ECO:0007669"/>
    <property type="project" value="UniProtKB-SubCell"/>
</dbReference>
<dbReference type="GO" id="GO:0031143">
    <property type="term" value="C:pseudopodium"/>
    <property type="evidence" value="ECO:0000314"/>
    <property type="project" value="UniProtKB"/>
</dbReference>
<dbReference type="GO" id="GO:0004869">
    <property type="term" value="F:cysteine-type endopeptidase inhibitor activity"/>
    <property type="evidence" value="ECO:0000315"/>
    <property type="project" value="UniProtKB"/>
</dbReference>
<dbReference type="GO" id="GO:0031434">
    <property type="term" value="F:mitogen-activated protein kinase kinase binding"/>
    <property type="evidence" value="ECO:0000314"/>
    <property type="project" value="UniProtKB"/>
</dbReference>
<dbReference type="GO" id="GO:0045746">
    <property type="term" value="P:negative regulation of Notch signaling pathway"/>
    <property type="evidence" value="ECO:0000315"/>
    <property type="project" value="UniProtKB"/>
</dbReference>
<dbReference type="GO" id="GO:0007602">
    <property type="term" value="P:phototransduction"/>
    <property type="evidence" value="ECO:0000315"/>
    <property type="project" value="MGI"/>
</dbReference>
<dbReference type="GO" id="GO:0070374">
    <property type="term" value="P:positive regulation of ERK1 and ERK2 cascade"/>
    <property type="evidence" value="ECO:0000315"/>
    <property type="project" value="UniProtKB"/>
</dbReference>
<dbReference type="GO" id="GO:0035774">
    <property type="term" value="P:positive regulation of insulin secretion involved in cellular response to glucose stimulus"/>
    <property type="evidence" value="ECO:0000315"/>
    <property type="project" value="UniProtKB"/>
</dbReference>
<dbReference type="GO" id="GO:0001934">
    <property type="term" value="P:positive regulation of protein phosphorylation"/>
    <property type="evidence" value="ECO:0000250"/>
    <property type="project" value="UniProtKB"/>
</dbReference>
<dbReference type="GO" id="GO:0002092">
    <property type="term" value="P:positive regulation of receptor internalization"/>
    <property type="evidence" value="ECO:0000250"/>
    <property type="project" value="UniProtKB"/>
</dbReference>
<dbReference type="GO" id="GO:0015031">
    <property type="term" value="P:protein transport"/>
    <property type="evidence" value="ECO:0007669"/>
    <property type="project" value="UniProtKB-KW"/>
</dbReference>
<dbReference type="GO" id="GO:0042981">
    <property type="term" value="P:regulation of apoptotic process"/>
    <property type="evidence" value="ECO:0000315"/>
    <property type="project" value="UniProtKB"/>
</dbReference>
<dbReference type="GO" id="GO:0008277">
    <property type="term" value="P:regulation of G protein-coupled receptor signaling pathway"/>
    <property type="evidence" value="ECO:0000315"/>
    <property type="project" value="MGI"/>
</dbReference>
<dbReference type="GO" id="GO:0006511">
    <property type="term" value="P:ubiquitin-dependent protein catabolic process"/>
    <property type="evidence" value="ECO:0000315"/>
    <property type="project" value="UniProtKB"/>
</dbReference>
<dbReference type="FunFam" id="2.60.40.640:FF:000003">
    <property type="entry name" value="beta-arrestin-1 isoform X1"/>
    <property type="match status" value="1"/>
</dbReference>
<dbReference type="FunFam" id="2.60.40.840:FF:000001">
    <property type="entry name" value="beta-arrestin-1 isoform X1"/>
    <property type="match status" value="1"/>
</dbReference>
<dbReference type="Gene3D" id="2.60.40.640">
    <property type="match status" value="1"/>
</dbReference>
<dbReference type="Gene3D" id="2.60.40.840">
    <property type="match status" value="1"/>
</dbReference>
<dbReference type="InterPro" id="IPR000698">
    <property type="entry name" value="Arrestin"/>
</dbReference>
<dbReference type="InterPro" id="IPR014752">
    <property type="entry name" value="Arrestin-like_C"/>
</dbReference>
<dbReference type="InterPro" id="IPR011021">
    <property type="entry name" value="Arrestin-like_N"/>
</dbReference>
<dbReference type="InterPro" id="IPR011022">
    <property type="entry name" value="Arrestin_C-like"/>
</dbReference>
<dbReference type="InterPro" id="IPR017864">
    <property type="entry name" value="Arrestin_CS"/>
</dbReference>
<dbReference type="InterPro" id="IPR014753">
    <property type="entry name" value="Arrestin_N"/>
</dbReference>
<dbReference type="InterPro" id="IPR014756">
    <property type="entry name" value="Ig_E-set"/>
</dbReference>
<dbReference type="PANTHER" id="PTHR11792">
    <property type="entry name" value="ARRESTIN"/>
    <property type="match status" value="1"/>
</dbReference>
<dbReference type="PANTHER" id="PTHR11792:SF22">
    <property type="entry name" value="BETA-ARRESTIN-1"/>
    <property type="match status" value="1"/>
</dbReference>
<dbReference type="Pfam" id="PF02752">
    <property type="entry name" value="Arrestin_C"/>
    <property type="match status" value="1"/>
</dbReference>
<dbReference type="Pfam" id="PF00339">
    <property type="entry name" value="Arrestin_N"/>
    <property type="match status" value="1"/>
</dbReference>
<dbReference type="PRINTS" id="PR00309">
    <property type="entry name" value="ARRESTIN"/>
</dbReference>
<dbReference type="SMART" id="SM01017">
    <property type="entry name" value="Arrestin_C"/>
    <property type="match status" value="1"/>
</dbReference>
<dbReference type="SUPFAM" id="SSF81296">
    <property type="entry name" value="E set domains"/>
    <property type="match status" value="2"/>
</dbReference>
<dbReference type="PROSITE" id="PS00295">
    <property type="entry name" value="ARRESTINS"/>
    <property type="match status" value="1"/>
</dbReference>
<sequence>MGDKGTRVFKKASPNGKLTVYLGKRDFVDHIDLVDPVDGVVLVDPEYLKERRVYVTLTCAFRYGREDLDVLGLTFRKDLFVANVQSFPPAPEDKKPLTRLQERLIKKLGEHACPFTFEIPPNLPCSVTLQPGPEDTGKACGVDYEVKAFCAENLEEKIHKRNSVRLVIRKVQYAPERPGPQPTAETTRQFLMSDKPLHLEASLDKEIYYHGEPISVNVHVTNNTNKTVKKIKISVRQYADICLFNTAQYKCPVAMEEADDNVAPSSTFCKVYTLTPFLANNREKRGLALDGKLKHEDTNLASSTLLREGANREILGIIVSYKVKVKLVVSRGGLLGDLASSDVAVELPFTLMHPKPKEEPPHREVPESETPVDTNLIELDTNDDDIVFEDFARQRLKGMKDDKDEEDDGTGSPHLNNR</sequence>
<name>ARRB1_MOUSE</name>
<keyword id="KW-0025">Alternative splicing</keyword>
<keyword id="KW-1003">Cell membrane</keyword>
<keyword id="KW-0966">Cell projection</keyword>
<keyword id="KW-0168">Coated pit</keyword>
<keyword id="KW-0963">Cytoplasm</keyword>
<keyword id="KW-0968">Cytoplasmic vesicle</keyword>
<keyword id="KW-0472">Membrane</keyword>
<keyword id="KW-0539">Nucleus</keyword>
<keyword id="KW-0597">Phosphoprotein</keyword>
<keyword id="KW-0653">Protein transport</keyword>
<keyword id="KW-1185">Reference proteome</keyword>
<keyword id="KW-0734">Signal transduction inhibitor</keyword>
<keyword id="KW-0804">Transcription</keyword>
<keyword id="KW-0805">Transcription regulation</keyword>
<keyword id="KW-0813">Transport</keyword>
<keyword id="KW-0832">Ubl conjugation</keyword>